<reference key="1">
    <citation type="journal article" date="2007" name="Science">
        <title>The Calyptogena magnifica chemoautotrophic symbiont genome.</title>
        <authorList>
            <person name="Newton I.L.G."/>
            <person name="Woyke T."/>
            <person name="Auchtung T.A."/>
            <person name="Dilly G.F."/>
            <person name="Dutton R.J."/>
            <person name="Fisher M.C."/>
            <person name="Fontanez K.M."/>
            <person name="Lau E."/>
            <person name="Stewart F.J."/>
            <person name="Richardson P.M."/>
            <person name="Barry K.W."/>
            <person name="Saunders E."/>
            <person name="Detter J.C."/>
            <person name="Wu D."/>
            <person name="Eisen J.A."/>
            <person name="Cavanaugh C.M."/>
        </authorList>
    </citation>
    <scope>NUCLEOTIDE SEQUENCE [LARGE SCALE GENOMIC DNA]</scope>
</reference>
<dbReference type="EMBL" id="CP000488">
    <property type="protein sequence ID" value="ABL01857.1"/>
    <property type="molecule type" value="Genomic_DNA"/>
</dbReference>
<dbReference type="RefSeq" id="WP_011737483.1">
    <property type="nucleotide sequence ID" value="NC_008610.1"/>
</dbReference>
<dbReference type="SMR" id="A1AVA0"/>
<dbReference type="STRING" id="413404.Rmag_0055"/>
<dbReference type="KEGG" id="rma:Rmag_0055"/>
<dbReference type="eggNOG" id="COG0858">
    <property type="taxonomic scope" value="Bacteria"/>
</dbReference>
<dbReference type="HOGENOM" id="CLU_089475_5_1_6"/>
<dbReference type="OrthoDB" id="307788at2"/>
<dbReference type="Proteomes" id="UP000002587">
    <property type="component" value="Chromosome"/>
</dbReference>
<dbReference type="GO" id="GO:0005829">
    <property type="term" value="C:cytosol"/>
    <property type="evidence" value="ECO:0007669"/>
    <property type="project" value="TreeGrafter"/>
</dbReference>
<dbReference type="GO" id="GO:0043024">
    <property type="term" value="F:ribosomal small subunit binding"/>
    <property type="evidence" value="ECO:0007669"/>
    <property type="project" value="TreeGrafter"/>
</dbReference>
<dbReference type="GO" id="GO:0030490">
    <property type="term" value="P:maturation of SSU-rRNA"/>
    <property type="evidence" value="ECO:0007669"/>
    <property type="project" value="UniProtKB-UniRule"/>
</dbReference>
<dbReference type="Gene3D" id="3.30.300.20">
    <property type="match status" value="1"/>
</dbReference>
<dbReference type="HAMAP" id="MF_00003">
    <property type="entry name" value="RbfA"/>
    <property type="match status" value="1"/>
</dbReference>
<dbReference type="InterPro" id="IPR015946">
    <property type="entry name" value="KH_dom-like_a/b"/>
</dbReference>
<dbReference type="InterPro" id="IPR000238">
    <property type="entry name" value="RbfA"/>
</dbReference>
<dbReference type="InterPro" id="IPR023799">
    <property type="entry name" value="RbfA_dom_sf"/>
</dbReference>
<dbReference type="InterPro" id="IPR020053">
    <property type="entry name" value="Ribosome-bd_factorA_CS"/>
</dbReference>
<dbReference type="NCBIfam" id="TIGR00082">
    <property type="entry name" value="rbfA"/>
    <property type="match status" value="1"/>
</dbReference>
<dbReference type="PANTHER" id="PTHR33515">
    <property type="entry name" value="RIBOSOME-BINDING FACTOR A, CHLOROPLASTIC-RELATED"/>
    <property type="match status" value="1"/>
</dbReference>
<dbReference type="PANTHER" id="PTHR33515:SF1">
    <property type="entry name" value="RIBOSOME-BINDING FACTOR A, CHLOROPLASTIC-RELATED"/>
    <property type="match status" value="1"/>
</dbReference>
<dbReference type="Pfam" id="PF02033">
    <property type="entry name" value="RBFA"/>
    <property type="match status" value="1"/>
</dbReference>
<dbReference type="SUPFAM" id="SSF89919">
    <property type="entry name" value="Ribosome-binding factor A, RbfA"/>
    <property type="match status" value="1"/>
</dbReference>
<dbReference type="PROSITE" id="PS01319">
    <property type="entry name" value="RBFA"/>
    <property type="match status" value="1"/>
</dbReference>
<gene>
    <name evidence="1" type="primary">rbfA</name>
    <name type="ordered locus">Rmag_0055</name>
</gene>
<accession>A1AVA0</accession>
<proteinExistence type="inferred from homology"/>
<organism>
    <name type="scientific">Ruthia magnifica subsp. Calyptogena magnifica</name>
    <dbReference type="NCBI Taxonomy" id="413404"/>
    <lineage>
        <taxon>Bacteria</taxon>
        <taxon>Pseudomonadati</taxon>
        <taxon>Pseudomonadota</taxon>
        <taxon>Gammaproteobacteria</taxon>
        <taxon>Candidatus Pseudothioglobaceae</taxon>
        <taxon>Candidatus Ruthturnera</taxon>
    </lineage>
</organism>
<evidence type="ECO:0000255" key="1">
    <source>
        <dbReference type="HAMAP-Rule" id="MF_00003"/>
    </source>
</evidence>
<keyword id="KW-0963">Cytoplasm</keyword>
<keyword id="KW-0690">Ribosome biogenesis</keyword>
<feature type="chain" id="PRO_0000321252" description="Ribosome-binding factor A">
    <location>
        <begin position="1"/>
        <end position="112"/>
    </location>
</feature>
<sequence length="112" mass="12648">MLEQTSYRVERISELIRRELTLLLKTTTKDPRLSGVMITDVLASRDLSSAKVFYTVTKEDRTVVEPILSKASGFFRSRLSKTLDLRHTPALGFIFDSASNTGARIEQLLSKL</sequence>
<protein>
    <recommendedName>
        <fullName evidence="1">Ribosome-binding factor A</fullName>
    </recommendedName>
</protein>
<comment type="function">
    <text evidence="1">One of several proteins that assist in the late maturation steps of the functional core of the 30S ribosomal subunit. Associates with free 30S ribosomal subunits (but not with 30S subunits that are part of 70S ribosomes or polysomes). Required for efficient processing of 16S rRNA. May interact with the 5'-terminal helix region of 16S rRNA.</text>
</comment>
<comment type="subunit">
    <text evidence="1">Monomer. Binds 30S ribosomal subunits, but not 50S ribosomal subunits or 70S ribosomes.</text>
</comment>
<comment type="subcellular location">
    <subcellularLocation>
        <location evidence="1">Cytoplasm</location>
    </subcellularLocation>
</comment>
<comment type="similarity">
    <text evidence="1">Belongs to the RbfA family.</text>
</comment>
<name>RBFA_RUTMC</name>